<keyword id="KW-0028">Amino-acid biosynthesis</keyword>
<keyword id="KW-0479">Metal-binding</keyword>
<keyword id="KW-0486">Methionine biosynthesis</keyword>
<keyword id="KW-0489">Methyltransferase</keyword>
<keyword id="KW-0677">Repeat</keyword>
<keyword id="KW-0808">Transferase</keyword>
<keyword id="KW-0862">Zinc</keyword>
<dbReference type="EC" id="2.1.1.14" evidence="1"/>
<dbReference type="EMBL" id="AM902716">
    <property type="protein sequence ID" value="CAP42399.1"/>
    <property type="molecule type" value="Genomic_DNA"/>
</dbReference>
<dbReference type="SMR" id="A9IKD8"/>
<dbReference type="STRING" id="94624.Bpet2059"/>
<dbReference type="KEGG" id="bpt:Bpet2059"/>
<dbReference type="eggNOG" id="COG0620">
    <property type="taxonomic scope" value="Bacteria"/>
</dbReference>
<dbReference type="UniPathway" id="UPA00051">
    <property type="reaction ID" value="UER00082"/>
</dbReference>
<dbReference type="Proteomes" id="UP000001225">
    <property type="component" value="Chromosome"/>
</dbReference>
<dbReference type="GO" id="GO:0003871">
    <property type="term" value="F:5-methyltetrahydropteroyltriglutamate-homocysteine S-methyltransferase activity"/>
    <property type="evidence" value="ECO:0007669"/>
    <property type="project" value="UniProtKB-UniRule"/>
</dbReference>
<dbReference type="GO" id="GO:0008270">
    <property type="term" value="F:zinc ion binding"/>
    <property type="evidence" value="ECO:0007669"/>
    <property type="project" value="InterPro"/>
</dbReference>
<dbReference type="GO" id="GO:0009086">
    <property type="term" value="P:methionine biosynthetic process"/>
    <property type="evidence" value="ECO:0007669"/>
    <property type="project" value="UniProtKB-UniRule"/>
</dbReference>
<dbReference type="GO" id="GO:0032259">
    <property type="term" value="P:methylation"/>
    <property type="evidence" value="ECO:0007669"/>
    <property type="project" value="UniProtKB-KW"/>
</dbReference>
<dbReference type="CDD" id="cd03311">
    <property type="entry name" value="CIMS_C_terminal_like"/>
    <property type="match status" value="1"/>
</dbReference>
<dbReference type="CDD" id="cd03312">
    <property type="entry name" value="CIMS_N_terminal_like"/>
    <property type="match status" value="1"/>
</dbReference>
<dbReference type="FunFam" id="3.20.20.210:FF:000002">
    <property type="entry name" value="5-methyltetrahydropteroyltriglutamate--homocysteine methyltransferase"/>
    <property type="match status" value="1"/>
</dbReference>
<dbReference type="Gene3D" id="3.20.20.210">
    <property type="match status" value="2"/>
</dbReference>
<dbReference type="HAMAP" id="MF_00172">
    <property type="entry name" value="Meth_synth"/>
    <property type="match status" value="1"/>
</dbReference>
<dbReference type="InterPro" id="IPR013215">
    <property type="entry name" value="Cbl-indep_Met_Synth_N"/>
</dbReference>
<dbReference type="InterPro" id="IPR006276">
    <property type="entry name" value="Cobalamin-indep_Met_synthase"/>
</dbReference>
<dbReference type="InterPro" id="IPR002629">
    <property type="entry name" value="Met_Synth_C/arc"/>
</dbReference>
<dbReference type="InterPro" id="IPR038071">
    <property type="entry name" value="UROD/MetE-like_sf"/>
</dbReference>
<dbReference type="NCBIfam" id="TIGR01371">
    <property type="entry name" value="met_syn_B12ind"/>
    <property type="match status" value="1"/>
</dbReference>
<dbReference type="NCBIfam" id="NF003556">
    <property type="entry name" value="PRK05222.1"/>
    <property type="match status" value="1"/>
</dbReference>
<dbReference type="PANTHER" id="PTHR30519">
    <property type="entry name" value="5-METHYLTETRAHYDROPTEROYLTRIGLUTAMATE--HOMOCYSTEINE METHYLTRANSFERASE"/>
    <property type="match status" value="1"/>
</dbReference>
<dbReference type="Pfam" id="PF08267">
    <property type="entry name" value="Meth_synt_1"/>
    <property type="match status" value="1"/>
</dbReference>
<dbReference type="Pfam" id="PF01717">
    <property type="entry name" value="Meth_synt_2"/>
    <property type="match status" value="1"/>
</dbReference>
<dbReference type="PIRSF" id="PIRSF000382">
    <property type="entry name" value="MeTrfase_B12_ind"/>
    <property type="match status" value="1"/>
</dbReference>
<dbReference type="SUPFAM" id="SSF51726">
    <property type="entry name" value="UROD/MetE-like"/>
    <property type="match status" value="2"/>
</dbReference>
<name>METE_BORPD</name>
<accession>A9IKD8</accession>
<evidence type="ECO:0000255" key="1">
    <source>
        <dbReference type="HAMAP-Rule" id="MF_00172"/>
    </source>
</evidence>
<proteinExistence type="inferred from homology"/>
<reference key="1">
    <citation type="journal article" date="2008" name="BMC Genomics">
        <title>The missing link: Bordetella petrii is endowed with both the metabolic versatility of environmental bacteria and virulence traits of pathogenic Bordetellae.</title>
        <authorList>
            <person name="Gross R."/>
            <person name="Guzman C.A."/>
            <person name="Sebaihia M."/>
            <person name="Martin dos Santos V.A.P."/>
            <person name="Pieper D.H."/>
            <person name="Koebnik R."/>
            <person name="Lechner M."/>
            <person name="Bartels D."/>
            <person name="Buhrmester J."/>
            <person name="Choudhuri J.V."/>
            <person name="Ebensen T."/>
            <person name="Gaigalat L."/>
            <person name="Herrmann S."/>
            <person name="Khachane A.N."/>
            <person name="Larisch C."/>
            <person name="Link S."/>
            <person name="Linke B."/>
            <person name="Meyer F."/>
            <person name="Mormann S."/>
            <person name="Nakunst D."/>
            <person name="Rueckert C."/>
            <person name="Schneiker-Bekel S."/>
            <person name="Schulze K."/>
            <person name="Voerholter F.-J."/>
            <person name="Yevsa T."/>
            <person name="Engle J.T."/>
            <person name="Goldman W.E."/>
            <person name="Puehler A."/>
            <person name="Goebel U.B."/>
            <person name="Goesmann A."/>
            <person name="Bloecker H."/>
            <person name="Kaiser O."/>
            <person name="Martinez-Arias R."/>
        </authorList>
    </citation>
    <scope>NUCLEOTIDE SEQUENCE [LARGE SCALE GENOMIC DNA]</scope>
    <source>
        <strain>ATCC BAA-461 / DSM 12804 / CCUG 43448</strain>
    </source>
</reference>
<gene>
    <name evidence="1" type="primary">metE</name>
    <name type="ordered locus">Bpet2059</name>
</gene>
<protein>
    <recommendedName>
        <fullName evidence="1">5-methyltetrahydropteroyltriglutamate--homocysteine methyltransferase</fullName>
        <ecNumber evidence="1">2.1.1.14</ecNumber>
    </recommendedName>
    <alternativeName>
        <fullName evidence="1">Cobalamin-independent methionine synthase</fullName>
    </alternativeName>
    <alternativeName>
        <fullName evidence="1">Methionine synthase, vitamin-B12 independent isozyme</fullName>
    </alternativeName>
</protein>
<feature type="chain" id="PRO_1000097816" description="5-methyltetrahydropteroyltriglutamate--homocysteine methyltransferase">
    <location>
        <begin position="1"/>
        <end position="764"/>
    </location>
</feature>
<feature type="active site" description="Proton donor" evidence="1">
    <location>
        <position position="705"/>
    </location>
</feature>
<feature type="binding site" evidence="1">
    <location>
        <begin position="16"/>
        <end position="19"/>
    </location>
    <ligand>
        <name>5-methyltetrahydropteroyltri-L-glutamate</name>
        <dbReference type="ChEBI" id="CHEBI:58207"/>
    </ligand>
</feature>
<feature type="binding site" evidence="1">
    <location>
        <position position="117"/>
    </location>
    <ligand>
        <name>5-methyltetrahydropteroyltri-L-glutamate</name>
        <dbReference type="ChEBI" id="CHEBI:58207"/>
    </ligand>
</feature>
<feature type="binding site" evidence="1">
    <location>
        <begin position="442"/>
        <end position="444"/>
    </location>
    <ligand>
        <name>L-homocysteine</name>
        <dbReference type="ChEBI" id="CHEBI:58199"/>
    </ligand>
</feature>
<feature type="binding site" evidence="1">
    <location>
        <begin position="442"/>
        <end position="444"/>
    </location>
    <ligand>
        <name>L-methionine</name>
        <dbReference type="ChEBI" id="CHEBI:57844"/>
    </ligand>
</feature>
<feature type="binding site" evidence="1">
    <location>
        <position position="495"/>
    </location>
    <ligand>
        <name>L-homocysteine</name>
        <dbReference type="ChEBI" id="CHEBI:58199"/>
    </ligand>
</feature>
<feature type="binding site" evidence="1">
    <location>
        <position position="495"/>
    </location>
    <ligand>
        <name>L-methionine</name>
        <dbReference type="ChEBI" id="CHEBI:57844"/>
    </ligand>
</feature>
<feature type="binding site" evidence="1">
    <location>
        <begin position="526"/>
        <end position="527"/>
    </location>
    <ligand>
        <name>5-methyltetrahydropteroyltri-L-glutamate</name>
        <dbReference type="ChEBI" id="CHEBI:58207"/>
    </ligand>
</feature>
<feature type="binding site" evidence="1">
    <location>
        <position position="572"/>
    </location>
    <ligand>
        <name>5-methyltetrahydropteroyltri-L-glutamate</name>
        <dbReference type="ChEBI" id="CHEBI:58207"/>
    </ligand>
</feature>
<feature type="binding site" evidence="1">
    <location>
        <position position="610"/>
    </location>
    <ligand>
        <name>L-homocysteine</name>
        <dbReference type="ChEBI" id="CHEBI:58199"/>
    </ligand>
</feature>
<feature type="binding site" evidence="1">
    <location>
        <position position="610"/>
    </location>
    <ligand>
        <name>L-methionine</name>
        <dbReference type="ChEBI" id="CHEBI:57844"/>
    </ligand>
</feature>
<feature type="binding site" evidence="1">
    <location>
        <position position="616"/>
    </location>
    <ligand>
        <name>5-methyltetrahydropteroyltri-L-glutamate</name>
        <dbReference type="ChEBI" id="CHEBI:58207"/>
    </ligand>
</feature>
<feature type="binding site" evidence="1">
    <location>
        <position position="652"/>
    </location>
    <ligand>
        <name>Zn(2+)</name>
        <dbReference type="ChEBI" id="CHEBI:29105"/>
        <note>catalytic</note>
    </ligand>
</feature>
<feature type="binding site" evidence="1">
    <location>
        <position position="654"/>
    </location>
    <ligand>
        <name>Zn(2+)</name>
        <dbReference type="ChEBI" id="CHEBI:29105"/>
        <note>catalytic</note>
    </ligand>
</feature>
<feature type="binding site" evidence="1">
    <location>
        <position position="676"/>
    </location>
    <ligand>
        <name>Zn(2+)</name>
        <dbReference type="ChEBI" id="CHEBI:29105"/>
        <note>catalytic</note>
    </ligand>
</feature>
<feature type="binding site" evidence="1">
    <location>
        <position position="737"/>
    </location>
    <ligand>
        <name>Zn(2+)</name>
        <dbReference type="ChEBI" id="CHEBI:29105"/>
        <note>catalytic</note>
    </ligand>
</feature>
<sequence>MTITHNLGFPRIGAQRELKRAVEAYWSGKKTAADLEETGRELRAAHWQRQAASGLQWVPVGDFAWYDHILEWTTLLGAVPARFGQPEGQPVSLDTLFRMGRGRAPSGTPTAACEMTKWFDTNYHYIVPELVPGQTFRIAREYLFEQVQEAQALGHQVKPVIPGPLTWLWQGKGDAYAGGASDAAKLQLLDTLLPVYAEVLARLARLGVEWVQIDEPILVLDLPQAWRDAFRTAYARLADAPVKLLVATYFGGLNDNLATALALPVAGLHVDLIRAPGQLQDVAAGLRPGQVLSAGIIDGRNIWRTDLDAALAALAPARQLLGERLWLAPSCSLLHVPVDLANETDLDAELRSWLSFAAQKLDELGLLGRALADARAPGVDEALAAQRAALRARRQSARIHNPAVGRRMAESNAVTRERAPFAERIARQQQLLKLPAFPTTTIGSFPQTAEIRALRRDWKSGALSDSAYEAAIRKEIESVIRFQEKIGLDVLVHGEPERNDMVEYFGELLAGFAFTRNGWVQSYGSRCVKPPIIFGDVARPAPMTVGWSSYAQSLTDKPVKGMLTGPVTILQWSFVRDDQPREQTCRQLALALRDEVVDLEQAGVRVIQIDEPAIREGLPLRRADWQAYLDWAVDCFRLSTAGVAADTQIHTHMCYSEFNDIIESIAAMDADVITIETSRSNMELLKAFEDFRYPNDIGPGVYDIHSPNVPDVDWMVGLMRKAAGRLPSERLWVNPDCGLKTRAWPETEAALVGMVEAARALRAG</sequence>
<comment type="function">
    <text evidence="1">Catalyzes the transfer of a methyl group from 5-methyltetrahydrofolate to homocysteine resulting in methionine formation.</text>
</comment>
<comment type="catalytic activity">
    <reaction evidence="1">
        <text>5-methyltetrahydropteroyltri-L-glutamate + L-homocysteine = tetrahydropteroyltri-L-glutamate + L-methionine</text>
        <dbReference type="Rhea" id="RHEA:21196"/>
        <dbReference type="ChEBI" id="CHEBI:57844"/>
        <dbReference type="ChEBI" id="CHEBI:58140"/>
        <dbReference type="ChEBI" id="CHEBI:58199"/>
        <dbReference type="ChEBI" id="CHEBI:58207"/>
        <dbReference type="EC" id="2.1.1.14"/>
    </reaction>
</comment>
<comment type="cofactor">
    <cofactor evidence="1">
        <name>Zn(2+)</name>
        <dbReference type="ChEBI" id="CHEBI:29105"/>
    </cofactor>
    <text evidence="1">Binds 1 zinc ion per subunit.</text>
</comment>
<comment type="pathway">
    <text evidence="1">Amino-acid biosynthesis; L-methionine biosynthesis via de novo pathway; L-methionine from L-homocysteine (MetE route): step 1/1.</text>
</comment>
<comment type="similarity">
    <text evidence="1">Belongs to the vitamin-B12 independent methionine synthase family.</text>
</comment>
<organism>
    <name type="scientific">Bordetella petrii (strain ATCC BAA-461 / DSM 12804 / CCUG 43448)</name>
    <dbReference type="NCBI Taxonomy" id="340100"/>
    <lineage>
        <taxon>Bacteria</taxon>
        <taxon>Pseudomonadati</taxon>
        <taxon>Pseudomonadota</taxon>
        <taxon>Betaproteobacteria</taxon>
        <taxon>Burkholderiales</taxon>
        <taxon>Alcaligenaceae</taxon>
        <taxon>Bordetella</taxon>
    </lineage>
</organism>